<feature type="chain" id="PRO_0000126078" description="Large ribosomal subunit protein eL27">
    <location>
        <begin position="1"/>
        <end position="136"/>
    </location>
</feature>
<feature type="domain" description="KOW">
    <location>
        <begin position="5"/>
        <end position="40"/>
    </location>
</feature>
<feature type="modified residue" description="N6-acetyllysine" evidence="8">
    <location>
        <position position="27"/>
    </location>
</feature>
<feature type="modified residue" description="N6-acetyllysine" evidence="2">
    <location>
        <position position="93"/>
    </location>
</feature>
<organism>
    <name type="scientific">Mus musculus</name>
    <name type="common">Mouse</name>
    <dbReference type="NCBI Taxonomy" id="10090"/>
    <lineage>
        <taxon>Eukaryota</taxon>
        <taxon>Metazoa</taxon>
        <taxon>Chordata</taxon>
        <taxon>Craniata</taxon>
        <taxon>Vertebrata</taxon>
        <taxon>Euteleostomi</taxon>
        <taxon>Mammalia</taxon>
        <taxon>Eutheria</taxon>
        <taxon>Euarchontoglires</taxon>
        <taxon>Glires</taxon>
        <taxon>Rodentia</taxon>
        <taxon>Myomorpha</taxon>
        <taxon>Muroidea</taxon>
        <taxon>Muridae</taxon>
        <taxon>Murinae</taxon>
        <taxon>Mus</taxon>
        <taxon>Mus</taxon>
    </lineage>
</organism>
<dbReference type="EMBL" id="AF214527">
    <property type="protein sequence ID" value="AAF25951.1"/>
    <property type="molecule type" value="mRNA"/>
</dbReference>
<dbReference type="EMBL" id="AK002945">
    <property type="protein sequence ID" value="BAB22471.1"/>
    <property type="molecule type" value="mRNA"/>
</dbReference>
<dbReference type="EMBL" id="AK008120">
    <property type="protein sequence ID" value="BAB25475.1"/>
    <property type="molecule type" value="mRNA"/>
</dbReference>
<dbReference type="EMBL" id="AK088211">
    <property type="protein sequence ID" value="BAC40213.1"/>
    <property type="molecule type" value="mRNA"/>
</dbReference>
<dbReference type="EMBL" id="AK010627">
    <property type="protein sequence ID" value="BAB27073.1"/>
    <property type="molecule type" value="mRNA"/>
</dbReference>
<dbReference type="EMBL" id="AK012566">
    <property type="protein sequence ID" value="BAB28321.1"/>
    <property type="molecule type" value="mRNA"/>
</dbReference>
<dbReference type="EMBL" id="BC024366">
    <property type="protein sequence ID" value="AAH24366.1"/>
    <property type="molecule type" value="mRNA"/>
</dbReference>
<dbReference type="EMBL" id="BC082284">
    <property type="protein sequence ID" value="AAH82284.1"/>
    <property type="molecule type" value="mRNA"/>
</dbReference>
<dbReference type="CCDS" id="CCDS25470.1"/>
<dbReference type="RefSeq" id="NP_035419.1">
    <property type="nucleotide sequence ID" value="NM_011289.3"/>
</dbReference>
<dbReference type="RefSeq" id="XP_017170385.1">
    <property type="nucleotide sequence ID" value="XM_017314896.1"/>
</dbReference>
<dbReference type="PDB" id="6SWA">
    <property type="method" value="EM"/>
    <property type="resolution" value="3.10 A"/>
    <property type="chains" value="X=1-136"/>
</dbReference>
<dbReference type="PDB" id="7CPU">
    <property type="method" value="EM"/>
    <property type="resolution" value="2.82 A"/>
    <property type="chains" value="LZ=1-136"/>
</dbReference>
<dbReference type="PDB" id="7CPV">
    <property type="method" value="EM"/>
    <property type="resolution" value="3.03 A"/>
    <property type="chains" value="LZ=1-136"/>
</dbReference>
<dbReference type="PDB" id="7LS1">
    <property type="method" value="EM"/>
    <property type="resolution" value="3.30 A"/>
    <property type="chains" value="T2=1-136"/>
</dbReference>
<dbReference type="PDB" id="7LS2">
    <property type="method" value="EM"/>
    <property type="resolution" value="3.10 A"/>
    <property type="chains" value="T2=1-136"/>
</dbReference>
<dbReference type="PDBsum" id="6SWA"/>
<dbReference type="PDBsum" id="7CPU"/>
<dbReference type="PDBsum" id="7CPV"/>
<dbReference type="PDBsum" id="7LS1"/>
<dbReference type="PDBsum" id="7LS2"/>
<dbReference type="EMDB" id="EMD-23500"/>
<dbReference type="EMDB" id="EMD-23501"/>
<dbReference type="EMDB" id="EMD-30432"/>
<dbReference type="EMDB" id="EMD-30433"/>
<dbReference type="SMR" id="P61358"/>
<dbReference type="BioGRID" id="202974">
    <property type="interactions" value="75"/>
</dbReference>
<dbReference type="ComplexPortal" id="CPX-5262">
    <property type="entry name" value="60S cytosolic large ribosomal subunit"/>
</dbReference>
<dbReference type="ComplexPortal" id="CPX-7662">
    <property type="entry name" value="60S cytosolic large ribosomal subunit, testis-specific variant"/>
</dbReference>
<dbReference type="ComplexPortal" id="CPX-7663">
    <property type="entry name" value="60S cytosolic large ribosomal subunit, striated muscle variant"/>
</dbReference>
<dbReference type="FunCoup" id="P61358">
    <property type="interactions" value="2281"/>
</dbReference>
<dbReference type="IntAct" id="P61358">
    <property type="interactions" value="5"/>
</dbReference>
<dbReference type="MINT" id="P61358"/>
<dbReference type="STRING" id="10090.ENSMUSP00000102870"/>
<dbReference type="GlyGen" id="P61358">
    <property type="glycosylation" value="1 site, 1 O-linked glycan (1 site)"/>
</dbReference>
<dbReference type="iPTMnet" id="P61358"/>
<dbReference type="MetOSite" id="P61358"/>
<dbReference type="PhosphoSitePlus" id="P61358"/>
<dbReference type="SwissPalm" id="P61358"/>
<dbReference type="jPOST" id="P61358"/>
<dbReference type="PaxDb" id="10090-ENSMUSP00000090305"/>
<dbReference type="PeptideAtlas" id="P61358"/>
<dbReference type="ProteomicsDB" id="253309"/>
<dbReference type="Pumba" id="P61358"/>
<dbReference type="TopDownProteomics" id="P61358"/>
<dbReference type="DNASU" id="19942"/>
<dbReference type="Ensembl" id="ENSMUST00000077856.13">
    <property type="protein sequence ID" value="ENSMUSP00000090305.6"/>
    <property type="gene ID" value="ENSMUSG00000063316.14"/>
</dbReference>
<dbReference type="Ensembl" id="ENSMUST00000107249.8">
    <property type="protein sequence ID" value="ENSMUSP00000102870.2"/>
    <property type="gene ID" value="ENSMUSG00000063316.14"/>
</dbReference>
<dbReference type="GeneID" id="19942"/>
<dbReference type="KEGG" id="mmu:19942"/>
<dbReference type="UCSC" id="uc007low.2">
    <property type="organism name" value="mouse"/>
</dbReference>
<dbReference type="AGR" id="MGI:98036"/>
<dbReference type="CTD" id="6155"/>
<dbReference type="MGI" id="MGI:98036">
    <property type="gene designation" value="Rpl27"/>
</dbReference>
<dbReference type="VEuPathDB" id="HostDB:ENSMUSG00000063316"/>
<dbReference type="eggNOG" id="KOG3418">
    <property type="taxonomic scope" value="Eukaryota"/>
</dbReference>
<dbReference type="GeneTree" id="ENSGT00390000010721"/>
<dbReference type="HOGENOM" id="CLU_067359_0_1_1"/>
<dbReference type="InParanoid" id="P61358"/>
<dbReference type="OMA" id="NQWFFTK"/>
<dbReference type="OrthoDB" id="2365484at2759"/>
<dbReference type="PhylomeDB" id="P61358"/>
<dbReference type="TreeFam" id="TF314648"/>
<dbReference type="Reactome" id="R-MMU-156827">
    <property type="pathway name" value="L13a-mediated translational silencing of Ceruloplasmin expression"/>
</dbReference>
<dbReference type="Reactome" id="R-MMU-1799339">
    <property type="pathway name" value="SRP-dependent cotranslational protein targeting to membrane"/>
</dbReference>
<dbReference type="Reactome" id="R-MMU-6791226">
    <property type="pathway name" value="Major pathway of rRNA processing in the nucleolus and cytosol"/>
</dbReference>
<dbReference type="Reactome" id="R-MMU-72689">
    <property type="pathway name" value="Formation of a pool of free 40S subunits"/>
</dbReference>
<dbReference type="Reactome" id="R-MMU-72706">
    <property type="pathway name" value="GTP hydrolysis and joining of the 60S ribosomal subunit"/>
</dbReference>
<dbReference type="Reactome" id="R-MMU-975956">
    <property type="pathway name" value="Nonsense Mediated Decay (NMD) independent of the Exon Junction Complex (EJC)"/>
</dbReference>
<dbReference type="Reactome" id="R-MMU-975957">
    <property type="pathway name" value="Nonsense Mediated Decay (NMD) enhanced by the Exon Junction Complex (EJC)"/>
</dbReference>
<dbReference type="BioGRID-ORCS" id="19942">
    <property type="hits" value="26 hits in 72 CRISPR screens"/>
</dbReference>
<dbReference type="CD-CODE" id="CE726F99">
    <property type="entry name" value="Postsynaptic density"/>
</dbReference>
<dbReference type="ChiTaRS" id="Rpl27">
    <property type="organism name" value="mouse"/>
</dbReference>
<dbReference type="PRO" id="PR:P61358"/>
<dbReference type="Proteomes" id="UP000000589">
    <property type="component" value="Chromosome 11"/>
</dbReference>
<dbReference type="RNAct" id="P61358">
    <property type="molecule type" value="protein"/>
</dbReference>
<dbReference type="Bgee" id="ENSMUSG00000063316">
    <property type="expression patterns" value="Expressed in yolk sac and 68 other cell types or tissues"/>
</dbReference>
<dbReference type="ExpressionAtlas" id="P61358">
    <property type="expression patterns" value="baseline and differential"/>
</dbReference>
<dbReference type="GO" id="GO:0005737">
    <property type="term" value="C:cytoplasm"/>
    <property type="evidence" value="ECO:0000314"/>
    <property type="project" value="ComplexPortal"/>
</dbReference>
<dbReference type="GO" id="GO:0098556">
    <property type="term" value="C:cytoplasmic side of rough endoplasmic reticulum membrane"/>
    <property type="evidence" value="ECO:0000250"/>
    <property type="project" value="UniProtKB"/>
</dbReference>
<dbReference type="GO" id="GO:0005829">
    <property type="term" value="C:cytosol"/>
    <property type="evidence" value="ECO:0000304"/>
    <property type="project" value="Reactome"/>
</dbReference>
<dbReference type="GO" id="GO:0022625">
    <property type="term" value="C:cytosolic large ribosomal subunit"/>
    <property type="evidence" value="ECO:0000314"/>
    <property type="project" value="UniProtKB"/>
</dbReference>
<dbReference type="GO" id="GO:0015934">
    <property type="term" value="C:large ribosomal subunit"/>
    <property type="evidence" value="ECO:0000250"/>
    <property type="project" value="UniProtKB"/>
</dbReference>
<dbReference type="GO" id="GO:0005730">
    <property type="term" value="C:nucleolus"/>
    <property type="evidence" value="ECO:0007669"/>
    <property type="project" value="Ensembl"/>
</dbReference>
<dbReference type="GO" id="GO:0005654">
    <property type="term" value="C:nucleoplasm"/>
    <property type="evidence" value="ECO:0007669"/>
    <property type="project" value="Ensembl"/>
</dbReference>
<dbReference type="GO" id="GO:0098794">
    <property type="term" value="C:postsynapse"/>
    <property type="evidence" value="ECO:0000303"/>
    <property type="project" value="SynGO"/>
</dbReference>
<dbReference type="GO" id="GO:0098793">
    <property type="term" value="C:presynapse"/>
    <property type="evidence" value="ECO:0000303"/>
    <property type="project" value="SynGO"/>
</dbReference>
<dbReference type="GO" id="GO:1990904">
    <property type="term" value="C:ribonucleoprotein complex"/>
    <property type="evidence" value="ECO:0000266"/>
    <property type="project" value="MGI"/>
</dbReference>
<dbReference type="GO" id="GO:0005840">
    <property type="term" value="C:ribosome"/>
    <property type="evidence" value="ECO:0000303"/>
    <property type="project" value="SynGO"/>
</dbReference>
<dbReference type="GO" id="GO:0045202">
    <property type="term" value="C:synapse"/>
    <property type="evidence" value="ECO:0000314"/>
    <property type="project" value="SynGO"/>
</dbReference>
<dbReference type="GO" id="GO:0003735">
    <property type="term" value="F:structural constituent of ribosome"/>
    <property type="evidence" value="ECO:0000314"/>
    <property type="project" value="UniProtKB"/>
</dbReference>
<dbReference type="GO" id="GO:0002181">
    <property type="term" value="P:cytoplasmic translation"/>
    <property type="evidence" value="ECO:0000303"/>
    <property type="project" value="ComplexPortal"/>
</dbReference>
<dbReference type="GO" id="GO:1904044">
    <property type="term" value="P:response to aldosterone"/>
    <property type="evidence" value="ECO:0007669"/>
    <property type="project" value="Ensembl"/>
</dbReference>
<dbReference type="GO" id="GO:0006364">
    <property type="term" value="P:rRNA processing"/>
    <property type="evidence" value="ECO:0000250"/>
    <property type="project" value="UniProtKB"/>
</dbReference>
<dbReference type="GO" id="GO:0140242">
    <property type="term" value="P:translation at postsynapse"/>
    <property type="evidence" value="ECO:0000303"/>
    <property type="project" value="SynGO"/>
</dbReference>
<dbReference type="GO" id="GO:0140236">
    <property type="term" value="P:translation at presynapse"/>
    <property type="evidence" value="ECO:0000303"/>
    <property type="project" value="SynGO"/>
</dbReference>
<dbReference type="CDD" id="cd06090">
    <property type="entry name" value="KOW_RPL27"/>
    <property type="match status" value="1"/>
</dbReference>
<dbReference type="FunFam" id="2.30.30.770:FF:000001">
    <property type="entry name" value="60S ribosomal protein L27"/>
    <property type="match status" value="1"/>
</dbReference>
<dbReference type="Gene3D" id="2.30.30.770">
    <property type="match status" value="1"/>
</dbReference>
<dbReference type="InterPro" id="IPR005824">
    <property type="entry name" value="KOW"/>
</dbReference>
<dbReference type="InterPro" id="IPR001141">
    <property type="entry name" value="Ribosomal_eL27"/>
</dbReference>
<dbReference type="InterPro" id="IPR018262">
    <property type="entry name" value="Ribosomal_eL27_CS"/>
</dbReference>
<dbReference type="InterPro" id="IPR041991">
    <property type="entry name" value="Ribosomal_eL27_KOW"/>
</dbReference>
<dbReference type="InterPro" id="IPR038655">
    <property type="entry name" value="Ribosomal_eL27_sf"/>
</dbReference>
<dbReference type="InterPro" id="IPR008991">
    <property type="entry name" value="Translation_prot_SH3-like_sf"/>
</dbReference>
<dbReference type="PANTHER" id="PTHR10497">
    <property type="entry name" value="60S RIBOSOMAL PROTEIN L27"/>
    <property type="match status" value="1"/>
</dbReference>
<dbReference type="Pfam" id="PF00467">
    <property type="entry name" value="KOW"/>
    <property type="match status" value="1"/>
</dbReference>
<dbReference type="Pfam" id="PF01777">
    <property type="entry name" value="Ribosomal_L27e"/>
    <property type="match status" value="1"/>
</dbReference>
<dbReference type="SMART" id="SM00739">
    <property type="entry name" value="KOW"/>
    <property type="match status" value="1"/>
</dbReference>
<dbReference type="SUPFAM" id="SSF50104">
    <property type="entry name" value="Translation proteins SH3-like domain"/>
    <property type="match status" value="1"/>
</dbReference>
<dbReference type="PROSITE" id="PS01107">
    <property type="entry name" value="RIBOSOMAL_L27E"/>
    <property type="match status" value="1"/>
</dbReference>
<keyword id="KW-0002">3D-structure</keyword>
<keyword id="KW-0007">Acetylation</keyword>
<keyword id="KW-0963">Cytoplasm</keyword>
<keyword id="KW-0256">Endoplasmic reticulum</keyword>
<keyword id="KW-1185">Reference proteome</keyword>
<keyword id="KW-0687">Ribonucleoprotein</keyword>
<keyword id="KW-0689">Ribosomal protein</keyword>
<accession>P61358</accession>
<name>RL27_MOUSE</name>
<reference key="1">
    <citation type="submission" date="1999-12" db="EMBL/GenBank/DDBJ databases">
        <title>Cloning and characterization of cDNA encoding mouse ribosomal protein L27.</title>
        <authorList>
            <person name="Jin C.G."/>
            <person name="Chen W.F."/>
            <person name="Li Y."/>
        </authorList>
    </citation>
    <scope>NUCLEOTIDE SEQUENCE [MRNA]</scope>
    <source>
        <strain>BALB/cJ</strain>
    </source>
</reference>
<reference key="2">
    <citation type="journal article" date="2005" name="Science">
        <title>The transcriptional landscape of the mammalian genome.</title>
        <authorList>
            <person name="Carninci P."/>
            <person name="Kasukawa T."/>
            <person name="Katayama S."/>
            <person name="Gough J."/>
            <person name="Frith M.C."/>
            <person name="Maeda N."/>
            <person name="Oyama R."/>
            <person name="Ravasi T."/>
            <person name="Lenhard B."/>
            <person name="Wells C."/>
            <person name="Kodzius R."/>
            <person name="Shimokawa K."/>
            <person name="Bajic V.B."/>
            <person name="Brenner S.E."/>
            <person name="Batalov S."/>
            <person name="Forrest A.R."/>
            <person name="Zavolan M."/>
            <person name="Davis M.J."/>
            <person name="Wilming L.G."/>
            <person name="Aidinis V."/>
            <person name="Allen J.E."/>
            <person name="Ambesi-Impiombato A."/>
            <person name="Apweiler R."/>
            <person name="Aturaliya R.N."/>
            <person name="Bailey T.L."/>
            <person name="Bansal M."/>
            <person name="Baxter L."/>
            <person name="Beisel K.W."/>
            <person name="Bersano T."/>
            <person name="Bono H."/>
            <person name="Chalk A.M."/>
            <person name="Chiu K.P."/>
            <person name="Choudhary V."/>
            <person name="Christoffels A."/>
            <person name="Clutterbuck D.R."/>
            <person name="Crowe M.L."/>
            <person name="Dalla E."/>
            <person name="Dalrymple B.P."/>
            <person name="de Bono B."/>
            <person name="Della Gatta G."/>
            <person name="di Bernardo D."/>
            <person name="Down T."/>
            <person name="Engstrom P."/>
            <person name="Fagiolini M."/>
            <person name="Faulkner G."/>
            <person name="Fletcher C.F."/>
            <person name="Fukushima T."/>
            <person name="Furuno M."/>
            <person name="Futaki S."/>
            <person name="Gariboldi M."/>
            <person name="Georgii-Hemming P."/>
            <person name="Gingeras T.R."/>
            <person name="Gojobori T."/>
            <person name="Green R.E."/>
            <person name="Gustincich S."/>
            <person name="Harbers M."/>
            <person name="Hayashi Y."/>
            <person name="Hensch T.K."/>
            <person name="Hirokawa N."/>
            <person name="Hill D."/>
            <person name="Huminiecki L."/>
            <person name="Iacono M."/>
            <person name="Ikeo K."/>
            <person name="Iwama A."/>
            <person name="Ishikawa T."/>
            <person name="Jakt M."/>
            <person name="Kanapin A."/>
            <person name="Katoh M."/>
            <person name="Kawasawa Y."/>
            <person name="Kelso J."/>
            <person name="Kitamura H."/>
            <person name="Kitano H."/>
            <person name="Kollias G."/>
            <person name="Krishnan S.P."/>
            <person name="Kruger A."/>
            <person name="Kummerfeld S.K."/>
            <person name="Kurochkin I.V."/>
            <person name="Lareau L.F."/>
            <person name="Lazarevic D."/>
            <person name="Lipovich L."/>
            <person name="Liu J."/>
            <person name="Liuni S."/>
            <person name="McWilliam S."/>
            <person name="Madan Babu M."/>
            <person name="Madera M."/>
            <person name="Marchionni L."/>
            <person name="Matsuda H."/>
            <person name="Matsuzawa S."/>
            <person name="Miki H."/>
            <person name="Mignone F."/>
            <person name="Miyake S."/>
            <person name="Morris K."/>
            <person name="Mottagui-Tabar S."/>
            <person name="Mulder N."/>
            <person name="Nakano N."/>
            <person name="Nakauchi H."/>
            <person name="Ng P."/>
            <person name="Nilsson R."/>
            <person name="Nishiguchi S."/>
            <person name="Nishikawa S."/>
            <person name="Nori F."/>
            <person name="Ohara O."/>
            <person name="Okazaki Y."/>
            <person name="Orlando V."/>
            <person name="Pang K.C."/>
            <person name="Pavan W.J."/>
            <person name="Pavesi G."/>
            <person name="Pesole G."/>
            <person name="Petrovsky N."/>
            <person name="Piazza S."/>
            <person name="Reed J."/>
            <person name="Reid J.F."/>
            <person name="Ring B.Z."/>
            <person name="Ringwald M."/>
            <person name="Rost B."/>
            <person name="Ruan Y."/>
            <person name="Salzberg S.L."/>
            <person name="Sandelin A."/>
            <person name="Schneider C."/>
            <person name="Schoenbach C."/>
            <person name="Sekiguchi K."/>
            <person name="Semple C.A."/>
            <person name="Seno S."/>
            <person name="Sessa L."/>
            <person name="Sheng Y."/>
            <person name="Shibata Y."/>
            <person name="Shimada H."/>
            <person name="Shimada K."/>
            <person name="Silva D."/>
            <person name="Sinclair B."/>
            <person name="Sperling S."/>
            <person name="Stupka E."/>
            <person name="Sugiura K."/>
            <person name="Sultana R."/>
            <person name="Takenaka Y."/>
            <person name="Taki K."/>
            <person name="Tammoja K."/>
            <person name="Tan S.L."/>
            <person name="Tang S."/>
            <person name="Taylor M.S."/>
            <person name="Tegner J."/>
            <person name="Teichmann S.A."/>
            <person name="Ueda H.R."/>
            <person name="van Nimwegen E."/>
            <person name="Verardo R."/>
            <person name="Wei C.L."/>
            <person name="Yagi K."/>
            <person name="Yamanishi H."/>
            <person name="Zabarovsky E."/>
            <person name="Zhu S."/>
            <person name="Zimmer A."/>
            <person name="Hide W."/>
            <person name="Bult C."/>
            <person name="Grimmond S.M."/>
            <person name="Teasdale R.D."/>
            <person name="Liu E.T."/>
            <person name="Brusic V."/>
            <person name="Quackenbush J."/>
            <person name="Wahlestedt C."/>
            <person name="Mattick J.S."/>
            <person name="Hume D.A."/>
            <person name="Kai C."/>
            <person name="Sasaki D."/>
            <person name="Tomaru Y."/>
            <person name="Fukuda S."/>
            <person name="Kanamori-Katayama M."/>
            <person name="Suzuki M."/>
            <person name="Aoki J."/>
            <person name="Arakawa T."/>
            <person name="Iida J."/>
            <person name="Imamura K."/>
            <person name="Itoh M."/>
            <person name="Kato T."/>
            <person name="Kawaji H."/>
            <person name="Kawagashira N."/>
            <person name="Kawashima T."/>
            <person name="Kojima M."/>
            <person name="Kondo S."/>
            <person name="Konno H."/>
            <person name="Nakano K."/>
            <person name="Ninomiya N."/>
            <person name="Nishio T."/>
            <person name="Okada M."/>
            <person name="Plessy C."/>
            <person name="Shibata K."/>
            <person name="Shiraki T."/>
            <person name="Suzuki S."/>
            <person name="Tagami M."/>
            <person name="Waki K."/>
            <person name="Watahiki A."/>
            <person name="Okamura-Oho Y."/>
            <person name="Suzuki H."/>
            <person name="Kawai J."/>
            <person name="Hayashizaki Y."/>
        </authorList>
    </citation>
    <scope>NUCLEOTIDE SEQUENCE [LARGE SCALE MRNA]</scope>
    <source>
        <strain>C57BL/6J</strain>
        <strain>NOD</strain>
        <tissue>Brain</tissue>
        <tissue>Small intestine</tissue>
        <tissue>Thymus</tissue>
    </source>
</reference>
<reference key="3">
    <citation type="journal article" date="2004" name="Genome Res.">
        <title>The status, quality, and expansion of the NIH full-length cDNA project: the Mammalian Gene Collection (MGC).</title>
        <authorList>
            <consortium name="The MGC Project Team"/>
        </authorList>
    </citation>
    <scope>NUCLEOTIDE SEQUENCE [LARGE SCALE MRNA]</scope>
    <source>
        <strain>129</strain>
        <strain>FVB/N</strain>
        <tissue>Colon</tissue>
        <tissue>Mammary gland</tissue>
    </source>
</reference>
<reference key="4">
    <citation type="journal article" date="2010" name="Cell">
        <title>A tissue-specific atlas of mouse protein phosphorylation and expression.</title>
        <authorList>
            <person name="Huttlin E.L."/>
            <person name="Jedrychowski M.P."/>
            <person name="Elias J.E."/>
            <person name="Goswami T."/>
            <person name="Rad R."/>
            <person name="Beausoleil S.A."/>
            <person name="Villen J."/>
            <person name="Haas W."/>
            <person name="Sowa M.E."/>
            <person name="Gygi S.P."/>
        </authorList>
    </citation>
    <scope>IDENTIFICATION BY MASS SPECTROMETRY [LARGE SCALE ANALYSIS]</scope>
    <source>
        <tissue>Brain</tissue>
        <tissue>Brown adipose tissue</tissue>
        <tissue>Heart</tissue>
        <tissue>Kidney</tissue>
        <tissue>Liver</tissue>
        <tissue>Lung</tissue>
        <tissue>Pancreas</tissue>
        <tissue>Spleen</tissue>
        <tissue>Testis</tissue>
    </source>
</reference>
<reference key="5">
    <citation type="journal article" date="2013" name="Proc. Natl. Acad. Sci. U.S.A.">
        <title>Label-free quantitative proteomics of the lysine acetylome in mitochondria identifies substrates of SIRT3 in metabolic pathways.</title>
        <authorList>
            <person name="Rardin M.J."/>
            <person name="Newman J.C."/>
            <person name="Held J.M."/>
            <person name="Cusack M.P."/>
            <person name="Sorensen D.J."/>
            <person name="Li B."/>
            <person name="Schilling B."/>
            <person name="Mooney S.D."/>
            <person name="Kahn C.R."/>
            <person name="Verdin E."/>
            <person name="Gibson B.W."/>
        </authorList>
    </citation>
    <scope>ACETYLATION [LARGE SCALE ANALYSIS] AT LYS-27</scope>
    <scope>IDENTIFICATION BY MASS SPECTROMETRY [LARGE SCALE ANALYSIS]</scope>
    <source>
        <tissue>Liver</tissue>
    </source>
</reference>
<reference key="6">
    <citation type="journal article" date="2015" name="Mol. Cell. Biol.">
        <title>The DHX33 RNA Helicase Promotes mRNA Translation Initiation.</title>
        <authorList>
            <person name="Zhang Y."/>
            <person name="You J."/>
            <person name="Wang X."/>
            <person name="Weber J."/>
        </authorList>
    </citation>
    <scope>INTERACTION WITH DHX33</scope>
</reference>
<reference evidence="6 7" key="7">
    <citation type="journal article" date="2022" name="Nature">
        <title>A male germ-cell-specific ribosome controls male fertility.</title>
        <authorList>
            <person name="Li H."/>
            <person name="Huo Y."/>
            <person name="He X."/>
            <person name="Yao L."/>
            <person name="Zhang H."/>
            <person name="Cui Y."/>
            <person name="Xiao H."/>
            <person name="Xie W."/>
            <person name="Zhang D."/>
            <person name="Wang Y."/>
            <person name="Zhang S."/>
            <person name="Tu H."/>
            <person name="Cheng Y."/>
            <person name="Guo Y."/>
            <person name="Cao X."/>
            <person name="Zhu Y."/>
            <person name="Jiang T."/>
            <person name="Guo X."/>
            <person name="Qin Y."/>
            <person name="Sha J."/>
        </authorList>
    </citation>
    <scope>STRUCTURE BY ELECTRON MICROSCOPY (3.03 ANGSTROMS) OF RIBOSOME</scope>
    <scope>FUNCTION</scope>
    <scope>SUBUNIT</scope>
    <scope>SUBCELLULAR LOCATION</scope>
</reference>
<protein>
    <recommendedName>
        <fullName evidence="5">Large ribosomal subunit protein eL27</fullName>
    </recommendedName>
    <alternativeName>
        <fullName>60S ribosomal protein L27</fullName>
    </alternativeName>
</protein>
<sequence length="136" mass="15798">MGKFMKPGKVVLVLAGRYSGRKAVIVKNIDDGTSDRPYSHALVAGIDRYPRKVTAAMGKKKIAKRSKIKSFVKVYNYNHLMPTRYSVDIPLDKTVVNKDVFRDPALKRKARREAKVKFEERYKTGKNKWFFQKLRF</sequence>
<evidence type="ECO:0000250" key="1">
    <source>
        <dbReference type="UniProtKB" id="A1XQU5"/>
    </source>
</evidence>
<evidence type="ECO:0000250" key="2">
    <source>
        <dbReference type="UniProtKB" id="P61353"/>
    </source>
</evidence>
<evidence type="ECO:0000269" key="3">
    <source>
    </source>
</evidence>
<evidence type="ECO:0000269" key="4">
    <source>
    </source>
</evidence>
<evidence type="ECO:0000305" key="5"/>
<evidence type="ECO:0007744" key="6">
    <source>
        <dbReference type="PDB" id="7CPU"/>
    </source>
</evidence>
<evidence type="ECO:0007744" key="7">
    <source>
        <dbReference type="PDB" id="7CPV"/>
    </source>
</evidence>
<evidence type="ECO:0007744" key="8">
    <source>
    </source>
</evidence>
<comment type="function">
    <text evidence="1 4">Component of the large ribosomal subunit (PubMed:36517592). Required for proper rRNA processing and maturation of 28S and 5.8S rRNAs (By similarity).</text>
</comment>
<comment type="subunit">
    <text evidence="1 3 4">Component of the large ribosomal subunit (PubMed:36517592). Interacts with RRP1B (By similarity). Interacts with DHX33 (PubMed:26100019).</text>
</comment>
<comment type="subcellular location">
    <subcellularLocation>
        <location evidence="2">Cytoplasm</location>
        <location evidence="2">Cytosol</location>
    </subcellularLocation>
    <subcellularLocation>
        <location evidence="4">Cytoplasm</location>
    </subcellularLocation>
    <subcellularLocation>
        <location evidence="1">Rough endoplasmic reticulum</location>
    </subcellularLocation>
    <text evidence="1 2">Detected on cytosolic polysomes (By similarity). Detected in ribosomes that are associated with the rough endoplasmic reticulum (By similarity).</text>
</comment>
<comment type="similarity">
    <text evidence="5">Belongs to the eukaryotic ribosomal protein eL27 family.</text>
</comment>
<gene>
    <name type="primary">Rpl27</name>
</gene>
<proteinExistence type="evidence at protein level"/>